<sequence>MNHPAARLDARLAPRLAERRQAGLYRCAEALEDYDGATAVRSDGQRCTVFCGNDYLGLAADPRPARALAEHARRQGSGAGAAHLVTGHRPEHEALEAELAAFTGREAALLFSTGYMANLGVVTTLVRRGQAVAEDRLNHASLIDAVRLAGGRPRRYRHADPTHLAQRLDDRAQLVVTDGVFSMDGDVAPLPELAAAAEATGAALVVDDAHGLGVIGPEGGGSVPATGCAPERVPVLVGTLGKAFGTFGAFVAGSRTLIDALRQWARPYIYTTAPPPAQAAAALEAVRIARAEGWRREHLQALIARFRSGARQLGLPVPQPAGPRTPIQPVLVGPSATATAWSAELDRRGLRVAAIRPPTVPAGTARLRVSLTACHSEEDVDRLLEALAAAARQAPPTLEAPS</sequence>
<feature type="chain" id="PRO_0000381009" description="8-amino-7-oxononanoate synthase">
    <location>
        <begin position="1"/>
        <end position="402"/>
    </location>
</feature>
<feature type="binding site" evidence="1">
    <location>
        <position position="26"/>
    </location>
    <ligand>
        <name>substrate</name>
    </ligand>
</feature>
<feature type="binding site" evidence="1">
    <location>
        <begin position="114"/>
        <end position="115"/>
    </location>
    <ligand>
        <name>pyridoxal 5'-phosphate</name>
        <dbReference type="ChEBI" id="CHEBI:597326"/>
    </ligand>
</feature>
<feature type="binding site" evidence="1">
    <location>
        <position position="139"/>
    </location>
    <ligand>
        <name>substrate</name>
    </ligand>
</feature>
<feature type="binding site" evidence="1">
    <location>
        <position position="182"/>
    </location>
    <ligand>
        <name>pyridoxal 5'-phosphate</name>
        <dbReference type="ChEBI" id="CHEBI:597326"/>
    </ligand>
</feature>
<feature type="binding site" evidence="1">
    <location>
        <position position="210"/>
    </location>
    <ligand>
        <name>pyridoxal 5'-phosphate</name>
        <dbReference type="ChEBI" id="CHEBI:597326"/>
    </ligand>
</feature>
<feature type="binding site" evidence="1">
    <location>
        <position position="239"/>
    </location>
    <ligand>
        <name>pyridoxal 5'-phosphate</name>
        <dbReference type="ChEBI" id="CHEBI:597326"/>
    </ligand>
</feature>
<feature type="binding site" evidence="1">
    <location>
        <position position="359"/>
    </location>
    <ligand>
        <name>substrate</name>
    </ligand>
</feature>
<feature type="modified residue" description="N6-(pyridoxal phosphate)lysine" evidence="1">
    <location>
        <position position="242"/>
    </location>
</feature>
<accession>A1WVM6</accession>
<evidence type="ECO:0000255" key="1">
    <source>
        <dbReference type="HAMAP-Rule" id="MF_01693"/>
    </source>
</evidence>
<dbReference type="EC" id="2.3.1.47" evidence="1"/>
<dbReference type="EMBL" id="CP000544">
    <property type="protein sequence ID" value="ABM61738.1"/>
    <property type="molecule type" value="Genomic_DNA"/>
</dbReference>
<dbReference type="RefSeq" id="WP_011813761.1">
    <property type="nucleotide sequence ID" value="NC_008789.1"/>
</dbReference>
<dbReference type="SMR" id="A1WVM6"/>
<dbReference type="STRING" id="349124.Hhal_0962"/>
<dbReference type="KEGG" id="hha:Hhal_0962"/>
<dbReference type="eggNOG" id="COG0156">
    <property type="taxonomic scope" value="Bacteria"/>
</dbReference>
<dbReference type="HOGENOM" id="CLU_015846_11_2_6"/>
<dbReference type="OrthoDB" id="9807157at2"/>
<dbReference type="UniPathway" id="UPA00078"/>
<dbReference type="Proteomes" id="UP000000647">
    <property type="component" value="Chromosome"/>
</dbReference>
<dbReference type="GO" id="GO:0008710">
    <property type="term" value="F:8-amino-7-oxononanoate synthase activity"/>
    <property type="evidence" value="ECO:0007669"/>
    <property type="project" value="UniProtKB-UniRule"/>
</dbReference>
<dbReference type="GO" id="GO:0030170">
    <property type="term" value="F:pyridoxal phosphate binding"/>
    <property type="evidence" value="ECO:0007669"/>
    <property type="project" value="UniProtKB-UniRule"/>
</dbReference>
<dbReference type="GO" id="GO:0009102">
    <property type="term" value="P:biotin biosynthetic process"/>
    <property type="evidence" value="ECO:0007669"/>
    <property type="project" value="UniProtKB-UniRule"/>
</dbReference>
<dbReference type="Gene3D" id="3.90.1150.10">
    <property type="entry name" value="Aspartate Aminotransferase, domain 1"/>
    <property type="match status" value="1"/>
</dbReference>
<dbReference type="Gene3D" id="3.40.640.10">
    <property type="entry name" value="Type I PLP-dependent aspartate aminotransferase-like (Major domain)"/>
    <property type="match status" value="1"/>
</dbReference>
<dbReference type="HAMAP" id="MF_01693">
    <property type="entry name" value="BioF_aminotrans_2"/>
    <property type="match status" value="1"/>
</dbReference>
<dbReference type="InterPro" id="IPR001917">
    <property type="entry name" value="Aminotrans_II_pyridoxalP_BS"/>
</dbReference>
<dbReference type="InterPro" id="IPR004839">
    <property type="entry name" value="Aminotransferase_I/II_large"/>
</dbReference>
<dbReference type="InterPro" id="IPR050087">
    <property type="entry name" value="AON_synthase_class-II"/>
</dbReference>
<dbReference type="InterPro" id="IPR004723">
    <property type="entry name" value="AONS_Archaea/Proteobacteria"/>
</dbReference>
<dbReference type="InterPro" id="IPR022834">
    <property type="entry name" value="AONS_Proteobacteria"/>
</dbReference>
<dbReference type="InterPro" id="IPR015424">
    <property type="entry name" value="PyrdxlP-dep_Trfase"/>
</dbReference>
<dbReference type="InterPro" id="IPR015421">
    <property type="entry name" value="PyrdxlP-dep_Trfase_major"/>
</dbReference>
<dbReference type="InterPro" id="IPR015422">
    <property type="entry name" value="PyrdxlP-dep_Trfase_small"/>
</dbReference>
<dbReference type="NCBIfam" id="TIGR00858">
    <property type="entry name" value="bioF"/>
    <property type="match status" value="1"/>
</dbReference>
<dbReference type="PANTHER" id="PTHR13693:SF100">
    <property type="entry name" value="8-AMINO-7-OXONONANOATE SYNTHASE"/>
    <property type="match status" value="1"/>
</dbReference>
<dbReference type="PANTHER" id="PTHR13693">
    <property type="entry name" value="CLASS II AMINOTRANSFERASE/8-AMINO-7-OXONONANOATE SYNTHASE"/>
    <property type="match status" value="1"/>
</dbReference>
<dbReference type="Pfam" id="PF00155">
    <property type="entry name" value="Aminotran_1_2"/>
    <property type="match status" value="1"/>
</dbReference>
<dbReference type="SUPFAM" id="SSF53383">
    <property type="entry name" value="PLP-dependent transferases"/>
    <property type="match status" value="1"/>
</dbReference>
<dbReference type="PROSITE" id="PS00599">
    <property type="entry name" value="AA_TRANSFER_CLASS_2"/>
    <property type="match status" value="1"/>
</dbReference>
<gene>
    <name evidence="1" type="primary">bioF</name>
    <name type="ordered locus">Hhal_0962</name>
</gene>
<protein>
    <recommendedName>
        <fullName evidence="1">8-amino-7-oxononanoate synthase</fullName>
        <shortName evidence="1">AONS</shortName>
        <ecNumber evidence="1">2.3.1.47</ecNumber>
    </recommendedName>
    <alternativeName>
        <fullName evidence="1">7-keto-8-amino-pelargonic acid synthase</fullName>
        <shortName evidence="1">7-KAP synthase</shortName>
        <shortName evidence="1">KAPA synthase</shortName>
    </alternativeName>
    <alternativeName>
        <fullName evidence="1">8-amino-7-ketopelargonate synthase</fullName>
    </alternativeName>
</protein>
<reference key="1">
    <citation type="submission" date="2006-12" db="EMBL/GenBank/DDBJ databases">
        <title>Complete sequence of Halorhodospira halophila SL1.</title>
        <authorList>
            <consortium name="US DOE Joint Genome Institute"/>
            <person name="Copeland A."/>
            <person name="Lucas S."/>
            <person name="Lapidus A."/>
            <person name="Barry K."/>
            <person name="Detter J.C."/>
            <person name="Glavina del Rio T."/>
            <person name="Hammon N."/>
            <person name="Israni S."/>
            <person name="Dalin E."/>
            <person name="Tice H."/>
            <person name="Pitluck S."/>
            <person name="Saunders E."/>
            <person name="Brettin T."/>
            <person name="Bruce D."/>
            <person name="Han C."/>
            <person name="Tapia R."/>
            <person name="Schmutz J."/>
            <person name="Larimer F."/>
            <person name="Land M."/>
            <person name="Hauser L."/>
            <person name="Kyrpides N."/>
            <person name="Mikhailova N."/>
            <person name="Hoff W."/>
            <person name="Richardson P."/>
        </authorList>
    </citation>
    <scope>NUCLEOTIDE SEQUENCE [LARGE SCALE GENOMIC DNA]</scope>
    <source>
        <strain>DSM 244 / SL1</strain>
    </source>
</reference>
<keyword id="KW-0093">Biotin biosynthesis</keyword>
<keyword id="KW-0663">Pyridoxal phosphate</keyword>
<keyword id="KW-1185">Reference proteome</keyword>
<keyword id="KW-0808">Transferase</keyword>
<comment type="function">
    <text evidence="1">Catalyzes the decarboxylative condensation of pimeloyl-[acyl-carrier protein] and L-alanine to produce 8-amino-7-oxononanoate (AON), [acyl-carrier protein], and carbon dioxide.</text>
</comment>
<comment type="catalytic activity">
    <reaction evidence="1">
        <text>6-carboxyhexanoyl-[ACP] + L-alanine + H(+) = (8S)-8-amino-7-oxononanoate + holo-[ACP] + CO2</text>
        <dbReference type="Rhea" id="RHEA:42288"/>
        <dbReference type="Rhea" id="RHEA-COMP:9685"/>
        <dbReference type="Rhea" id="RHEA-COMP:9955"/>
        <dbReference type="ChEBI" id="CHEBI:15378"/>
        <dbReference type="ChEBI" id="CHEBI:16526"/>
        <dbReference type="ChEBI" id="CHEBI:57972"/>
        <dbReference type="ChEBI" id="CHEBI:64479"/>
        <dbReference type="ChEBI" id="CHEBI:78846"/>
        <dbReference type="ChEBI" id="CHEBI:149468"/>
        <dbReference type="EC" id="2.3.1.47"/>
    </reaction>
</comment>
<comment type="cofactor">
    <cofactor evidence="1">
        <name>pyridoxal 5'-phosphate</name>
        <dbReference type="ChEBI" id="CHEBI:597326"/>
    </cofactor>
</comment>
<comment type="pathway">
    <text evidence="1">Cofactor biosynthesis; biotin biosynthesis.</text>
</comment>
<comment type="subunit">
    <text evidence="1">Homodimer.</text>
</comment>
<comment type="similarity">
    <text evidence="1">Belongs to the class-II pyridoxal-phosphate-dependent aminotransferase family. BioF subfamily.</text>
</comment>
<proteinExistence type="inferred from homology"/>
<name>BIOF_HALHL</name>
<organism>
    <name type="scientific">Halorhodospira halophila (strain DSM 244 / SL1)</name>
    <name type="common">Ectothiorhodospira halophila (strain DSM 244 / SL1)</name>
    <dbReference type="NCBI Taxonomy" id="349124"/>
    <lineage>
        <taxon>Bacteria</taxon>
        <taxon>Pseudomonadati</taxon>
        <taxon>Pseudomonadota</taxon>
        <taxon>Gammaproteobacteria</taxon>
        <taxon>Chromatiales</taxon>
        <taxon>Ectothiorhodospiraceae</taxon>
        <taxon>Halorhodospira</taxon>
    </lineage>
</organism>